<reference key="1">
    <citation type="journal article" date="2013" name="Nature">
        <title>The zebrafish reference genome sequence and its relationship to the human genome.</title>
        <authorList>
            <person name="Howe K."/>
            <person name="Clark M.D."/>
            <person name="Torroja C.F."/>
            <person name="Torrance J."/>
            <person name="Berthelot C."/>
            <person name="Muffato M."/>
            <person name="Collins J.E."/>
            <person name="Humphray S."/>
            <person name="McLaren K."/>
            <person name="Matthews L."/>
            <person name="McLaren S."/>
            <person name="Sealy I."/>
            <person name="Caccamo M."/>
            <person name="Churcher C."/>
            <person name="Scott C."/>
            <person name="Barrett J.C."/>
            <person name="Koch R."/>
            <person name="Rauch G.J."/>
            <person name="White S."/>
            <person name="Chow W."/>
            <person name="Kilian B."/>
            <person name="Quintais L.T."/>
            <person name="Guerra-Assuncao J.A."/>
            <person name="Zhou Y."/>
            <person name="Gu Y."/>
            <person name="Yen J."/>
            <person name="Vogel J.H."/>
            <person name="Eyre T."/>
            <person name="Redmond S."/>
            <person name="Banerjee R."/>
            <person name="Chi J."/>
            <person name="Fu B."/>
            <person name="Langley E."/>
            <person name="Maguire S.F."/>
            <person name="Laird G.K."/>
            <person name="Lloyd D."/>
            <person name="Kenyon E."/>
            <person name="Donaldson S."/>
            <person name="Sehra H."/>
            <person name="Almeida-King J."/>
            <person name="Loveland J."/>
            <person name="Trevanion S."/>
            <person name="Jones M."/>
            <person name="Quail M."/>
            <person name="Willey D."/>
            <person name="Hunt A."/>
            <person name="Burton J."/>
            <person name="Sims S."/>
            <person name="McLay K."/>
            <person name="Plumb B."/>
            <person name="Davis J."/>
            <person name="Clee C."/>
            <person name="Oliver K."/>
            <person name="Clark R."/>
            <person name="Riddle C."/>
            <person name="Elliot D."/>
            <person name="Threadgold G."/>
            <person name="Harden G."/>
            <person name="Ware D."/>
            <person name="Begum S."/>
            <person name="Mortimore B."/>
            <person name="Kerry G."/>
            <person name="Heath P."/>
            <person name="Phillimore B."/>
            <person name="Tracey A."/>
            <person name="Corby N."/>
            <person name="Dunn M."/>
            <person name="Johnson C."/>
            <person name="Wood J."/>
            <person name="Clark S."/>
            <person name="Pelan S."/>
            <person name="Griffiths G."/>
            <person name="Smith M."/>
            <person name="Glithero R."/>
            <person name="Howden P."/>
            <person name="Barker N."/>
            <person name="Lloyd C."/>
            <person name="Stevens C."/>
            <person name="Harley J."/>
            <person name="Holt K."/>
            <person name="Panagiotidis G."/>
            <person name="Lovell J."/>
            <person name="Beasley H."/>
            <person name="Henderson C."/>
            <person name="Gordon D."/>
            <person name="Auger K."/>
            <person name="Wright D."/>
            <person name="Collins J."/>
            <person name="Raisen C."/>
            <person name="Dyer L."/>
            <person name="Leung K."/>
            <person name="Robertson L."/>
            <person name="Ambridge K."/>
            <person name="Leongamornlert D."/>
            <person name="McGuire S."/>
            <person name="Gilderthorp R."/>
            <person name="Griffiths C."/>
            <person name="Manthravadi D."/>
            <person name="Nichol S."/>
            <person name="Barker G."/>
            <person name="Whitehead S."/>
            <person name="Kay M."/>
            <person name="Brown J."/>
            <person name="Murnane C."/>
            <person name="Gray E."/>
            <person name="Humphries M."/>
            <person name="Sycamore N."/>
            <person name="Barker D."/>
            <person name="Saunders D."/>
            <person name="Wallis J."/>
            <person name="Babbage A."/>
            <person name="Hammond S."/>
            <person name="Mashreghi-Mohammadi M."/>
            <person name="Barr L."/>
            <person name="Martin S."/>
            <person name="Wray P."/>
            <person name="Ellington A."/>
            <person name="Matthews N."/>
            <person name="Ellwood M."/>
            <person name="Woodmansey R."/>
            <person name="Clark G."/>
            <person name="Cooper J."/>
            <person name="Tromans A."/>
            <person name="Grafham D."/>
            <person name="Skuce C."/>
            <person name="Pandian R."/>
            <person name="Andrews R."/>
            <person name="Harrison E."/>
            <person name="Kimberley A."/>
            <person name="Garnett J."/>
            <person name="Fosker N."/>
            <person name="Hall R."/>
            <person name="Garner P."/>
            <person name="Kelly D."/>
            <person name="Bird C."/>
            <person name="Palmer S."/>
            <person name="Gehring I."/>
            <person name="Berger A."/>
            <person name="Dooley C.M."/>
            <person name="Ersan-Urun Z."/>
            <person name="Eser C."/>
            <person name="Geiger H."/>
            <person name="Geisler M."/>
            <person name="Karotki L."/>
            <person name="Kirn A."/>
            <person name="Konantz J."/>
            <person name="Konantz M."/>
            <person name="Oberlander M."/>
            <person name="Rudolph-Geiger S."/>
            <person name="Teucke M."/>
            <person name="Lanz C."/>
            <person name="Raddatz G."/>
            <person name="Osoegawa K."/>
            <person name="Zhu B."/>
            <person name="Rapp A."/>
            <person name="Widaa S."/>
            <person name="Langford C."/>
            <person name="Yang F."/>
            <person name="Schuster S.C."/>
            <person name="Carter N.P."/>
            <person name="Harrow J."/>
            <person name="Ning Z."/>
            <person name="Herrero J."/>
            <person name="Searle S.M."/>
            <person name="Enright A."/>
            <person name="Geisler R."/>
            <person name="Plasterk R.H."/>
            <person name="Lee C."/>
            <person name="Westerfield M."/>
            <person name="de Jong P.J."/>
            <person name="Zon L.I."/>
            <person name="Postlethwait J.H."/>
            <person name="Nusslein-Volhard C."/>
            <person name="Hubbard T.J."/>
            <person name="Roest Crollius H."/>
            <person name="Rogers J."/>
            <person name="Stemple D.L."/>
        </authorList>
    </citation>
    <scope>NUCLEOTIDE SEQUENCE [LARGE SCALE GENOMIC DNA]</scope>
    <source>
        <strain>Tuebingen</strain>
    </source>
</reference>
<comment type="function">
    <text evidence="1">Specifically deubiquitinates 'Lys-120' of histone H2A (H2AK119Ub), a specific tag for epigenetic transcriptional repression, thereby acting as a coactivator. Deubiquitination of histone H2A is a prerequisite for subsequent phosphorylation at 'Ser-11' of histone H3 (H3S10ph), and is required for chromosome segregation when cells enter into mitosis. Regulates Hox gene expression via histone H2A deubiquitination. Prefers nucleosomal substrates. Does not deubiquitinate histone H2B.</text>
</comment>
<comment type="catalytic activity">
    <reaction evidence="1">
        <text>Thiol-dependent hydrolysis of ester, thioester, amide, peptide and isopeptide bonds formed by the C-terminal Gly of ubiquitin (a 76-residue protein attached to proteins as an intracellular targeting signal).</text>
        <dbReference type="EC" id="3.4.19.12"/>
    </reaction>
</comment>
<comment type="subunit">
    <text evidence="1">Homotetramer.</text>
</comment>
<comment type="subcellular location">
    <subcellularLocation>
        <location evidence="1">Nucleus</location>
    </subcellularLocation>
</comment>
<comment type="domain">
    <text evidence="1">The UBP-type zinc finger binds 3 zinc ions that form a pair of cross-braced ring fingers encapsulated within a third zinc finger in the primary structure. It recognizes the C-terminal tail of free ubiquitin.</text>
</comment>
<comment type="similarity">
    <text evidence="1">Belongs to the peptidase C19 family. USP16 subfamily.</text>
</comment>
<dbReference type="EC" id="3.4.19.12" evidence="1"/>
<dbReference type="EMBL" id="CR854897">
    <property type="protein sequence ID" value="CAP09451.1"/>
    <property type="molecule type" value="Genomic_DNA"/>
</dbReference>
<dbReference type="RefSeq" id="NP_001139569.1">
    <property type="nucleotide sequence ID" value="NM_001146097.1"/>
</dbReference>
<dbReference type="RefSeq" id="XP_009290187.1">
    <property type="nucleotide sequence ID" value="XM_009291912.4"/>
</dbReference>
<dbReference type="RefSeq" id="XP_021337123.1">
    <property type="nucleotide sequence ID" value="XM_021481448.2"/>
</dbReference>
<dbReference type="SMR" id="A8HAL1"/>
<dbReference type="FunCoup" id="A8HAL1">
    <property type="interactions" value="2139"/>
</dbReference>
<dbReference type="STRING" id="7955.ENSDARP00000080080"/>
<dbReference type="PaxDb" id="7955-ENSDARP00000080080"/>
<dbReference type="PeptideAtlas" id="A8HAL1"/>
<dbReference type="Ensembl" id="ENSDART00000085645">
    <property type="protein sequence ID" value="ENSDARP00000080080"/>
    <property type="gene ID" value="ENSDARG00000060633"/>
</dbReference>
<dbReference type="Ensembl" id="ENSDART00000192112">
    <property type="protein sequence ID" value="ENSDARP00000144791"/>
    <property type="gene ID" value="ENSDARG00000090935"/>
</dbReference>
<dbReference type="GeneID" id="569700"/>
<dbReference type="KEGG" id="dre:569700"/>
<dbReference type="AGR" id="ZFIN:ZDB-GENE-030131-4153"/>
<dbReference type="CTD" id="10600"/>
<dbReference type="ZFIN" id="ZDB-GENE-030131-4153">
    <property type="gene designation" value="usp16"/>
</dbReference>
<dbReference type="eggNOG" id="KOG1873">
    <property type="taxonomic scope" value="Eukaryota"/>
</dbReference>
<dbReference type="HOGENOM" id="CLU_007938_1_0_1"/>
<dbReference type="InParanoid" id="A8HAL1"/>
<dbReference type="OMA" id="MAAGHYV"/>
<dbReference type="OrthoDB" id="2020758at2759"/>
<dbReference type="PhylomeDB" id="A8HAL1"/>
<dbReference type="TreeFam" id="TF326075"/>
<dbReference type="Reactome" id="R-DRE-5689880">
    <property type="pathway name" value="Ub-specific processing proteases"/>
</dbReference>
<dbReference type="PRO" id="PR:A8HAL1"/>
<dbReference type="Proteomes" id="UP000000437">
    <property type="component" value="Chromosome 15"/>
</dbReference>
<dbReference type="Bgee" id="ENSDARG00000060633">
    <property type="expression patterns" value="Expressed in blastula and 22 other cell types or tissues"/>
</dbReference>
<dbReference type="ExpressionAtlas" id="A8HAL1">
    <property type="expression patterns" value="baseline"/>
</dbReference>
<dbReference type="GO" id="GO:0005634">
    <property type="term" value="C:nucleus"/>
    <property type="evidence" value="ECO:0000250"/>
    <property type="project" value="UniProtKB"/>
</dbReference>
<dbReference type="GO" id="GO:0004843">
    <property type="term" value="F:cysteine-type deubiquitinase activity"/>
    <property type="evidence" value="ECO:0000250"/>
    <property type="project" value="UniProtKB"/>
</dbReference>
<dbReference type="GO" id="GO:0004197">
    <property type="term" value="F:cysteine-type endopeptidase activity"/>
    <property type="evidence" value="ECO:0000250"/>
    <property type="project" value="UniProtKB"/>
</dbReference>
<dbReference type="GO" id="GO:0042393">
    <property type="term" value="F:histone binding"/>
    <property type="evidence" value="ECO:0000250"/>
    <property type="project" value="UniProtKB"/>
</dbReference>
<dbReference type="GO" id="GO:0140950">
    <property type="term" value="F:histone H2A deubiquitinase activity"/>
    <property type="evidence" value="ECO:0000250"/>
    <property type="project" value="UniProtKB"/>
</dbReference>
<dbReference type="GO" id="GO:0003713">
    <property type="term" value="F:transcription coactivator activity"/>
    <property type="evidence" value="ECO:0000250"/>
    <property type="project" value="UniProtKB"/>
</dbReference>
<dbReference type="GO" id="GO:0043130">
    <property type="term" value="F:ubiquitin binding"/>
    <property type="evidence" value="ECO:0000250"/>
    <property type="project" value="UniProtKB"/>
</dbReference>
<dbReference type="GO" id="GO:0008270">
    <property type="term" value="F:zinc ion binding"/>
    <property type="evidence" value="ECO:0000250"/>
    <property type="project" value="UniProtKB"/>
</dbReference>
<dbReference type="GO" id="GO:0051301">
    <property type="term" value="P:cell division"/>
    <property type="evidence" value="ECO:0007669"/>
    <property type="project" value="UniProtKB-KW"/>
</dbReference>
<dbReference type="GO" id="GO:0006974">
    <property type="term" value="P:DNA damage response"/>
    <property type="evidence" value="ECO:0000250"/>
    <property type="project" value="UniProtKB"/>
</dbReference>
<dbReference type="GO" id="GO:0140014">
    <property type="term" value="P:mitotic nuclear division"/>
    <property type="evidence" value="ECO:0007669"/>
    <property type="project" value="UniProtKB-UniRule"/>
</dbReference>
<dbReference type="GO" id="GO:0045893">
    <property type="term" value="P:positive regulation of DNA-templated transcription"/>
    <property type="evidence" value="ECO:0000250"/>
    <property type="project" value="UniProtKB"/>
</dbReference>
<dbReference type="GO" id="GO:0045901">
    <property type="term" value="P:positive regulation of translational elongation"/>
    <property type="evidence" value="ECO:0000250"/>
    <property type="project" value="UniProtKB"/>
</dbReference>
<dbReference type="GO" id="GO:0016579">
    <property type="term" value="P:protein deubiquitination"/>
    <property type="evidence" value="ECO:0007669"/>
    <property type="project" value="InterPro"/>
</dbReference>
<dbReference type="GO" id="GO:0051289">
    <property type="term" value="P:protein homotetramerization"/>
    <property type="evidence" value="ECO:0000250"/>
    <property type="project" value="UniProtKB"/>
</dbReference>
<dbReference type="GO" id="GO:0006508">
    <property type="term" value="P:proteolysis"/>
    <property type="evidence" value="ECO:0007669"/>
    <property type="project" value="UniProtKB-KW"/>
</dbReference>
<dbReference type="GO" id="GO:0051726">
    <property type="term" value="P:regulation of cell cycle"/>
    <property type="evidence" value="ECO:0007669"/>
    <property type="project" value="InterPro"/>
</dbReference>
<dbReference type="CDD" id="cd02667">
    <property type="entry name" value="Peptidase_C19K"/>
    <property type="match status" value="1"/>
</dbReference>
<dbReference type="FunFam" id="3.30.40.10:FF:000147">
    <property type="entry name" value="Ubiquitin carboxyl-terminal hydrolase 16"/>
    <property type="match status" value="1"/>
</dbReference>
<dbReference type="FunFam" id="3.90.70.10:FF:000045">
    <property type="entry name" value="Ubiquitin carboxyl-terminal hydrolase 16"/>
    <property type="match status" value="1"/>
</dbReference>
<dbReference type="FunFam" id="3.90.70.10:FF:000102">
    <property type="entry name" value="Ubiquitinyl hydrolase 1"/>
    <property type="match status" value="1"/>
</dbReference>
<dbReference type="Gene3D" id="3.90.70.10">
    <property type="entry name" value="Cysteine proteinases"/>
    <property type="match status" value="2"/>
</dbReference>
<dbReference type="Gene3D" id="3.30.40.10">
    <property type="entry name" value="Zinc/RING finger domain, C3HC4 (zinc finger)"/>
    <property type="match status" value="1"/>
</dbReference>
<dbReference type="HAMAP" id="MF_03062">
    <property type="entry name" value="UBP16"/>
    <property type="match status" value="1"/>
</dbReference>
<dbReference type="InterPro" id="IPR038765">
    <property type="entry name" value="Papain-like_cys_pep_sf"/>
</dbReference>
<dbReference type="InterPro" id="IPR050164">
    <property type="entry name" value="Peptidase_C19"/>
</dbReference>
<dbReference type="InterPro" id="IPR001394">
    <property type="entry name" value="Peptidase_C19_UCH"/>
</dbReference>
<dbReference type="InterPro" id="IPR030849">
    <property type="entry name" value="UBP16"/>
</dbReference>
<dbReference type="InterPro" id="IPR018200">
    <property type="entry name" value="USP_CS"/>
</dbReference>
<dbReference type="InterPro" id="IPR028889">
    <property type="entry name" value="USP_dom"/>
</dbReference>
<dbReference type="InterPro" id="IPR013083">
    <property type="entry name" value="Znf_RING/FYVE/PHD"/>
</dbReference>
<dbReference type="InterPro" id="IPR001607">
    <property type="entry name" value="Znf_UBP"/>
</dbReference>
<dbReference type="PANTHER" id="PTHR24006">
    <property type="entry name" value="UBIQUITIN CARBOXYL-TERMINAL HYDROLASE"/>
    <property type="match status" value="1"/>
</dbReference>
<dbReference type="PANTHER" id="PTHR24006:SF852">
    <property type="entry name" value="UBIQUITIN CARBOXYL-TERMINAL HYDROLASE"/>
    <property type="match status" value="1"/>
</dbReference>
<dbReference type="Pfam" id="PF00443">
    <property type="entry name" value="UCH"/>
    <property type="match status" value="1"/>
</dbReference>
<dbReference type="Pfam" id="PF02148">
    <property type="entry name" value="zf-UBP"/>
    <property type="match status" value="1"/>
</dbReference>
<dbReference type="SMART" id="SM00290">
    <property type="entry name" value="ZnF_UBP"/>
    <property type="match status" value="1"/>
</dbReference>
<dbReference type="SUPFAM" id="SSF54001">
    <property type="entry name" value="Cysteine proteinases"/>
    <property type="match status" value="1"/>
</dbReference>
<dbReference type="SUPFAM" id="SSF57850">
    <property type="entry name" value="RING/U-box"/>
    <property type="match status" value="1"/>
</dbReference>
<dbReference type="PROSITE" id="PS00972">
    <property type="entry name" value="USP_1"/>
    <property type="match status" value="1"/>
</dbReference>
<dbReference type="PROSITE" id="PS00973">
    <property type="entry name" value="USP_2"/>
    <property type="match status" value="1"/>
</dbReference>
<dbReference type="PROSITE" id="PS50235">
    <property type="entry name" value="USP_3"/>
    <property type="match status" value="1"/>
</dbReference>
<dbReference type="PROSITE" id="PS50271">
    <property type="entry name" value="ZF_UBP"/>
    <property type="match status" value="1"/>
</dbReference>
<accession>A8HAL1</accession>
<evidence type="ECO:0000255" key="1">
    <source>
        <dbReference type="HAMAP-Rule" id="MF_03062"/>
    </source>
</evidence>
<evidence type="ECO:0000255" key="2">
    <source>
        <dbReference type="PROSITE-ProRule" id="PRU00502"/>
    </source>
</evidence>
<evidence type="ECO:0000256" key="3">
    <source>
        <dbReference type="SAM" id="MobiDB-lite"/>
    </source>
</evidence>
<protein>
    <recommendedName>
        <fullName evidence="1">Ubiquitin carboxyl-terminal hydrolase 16</fullName>
        <ecNumber evidence="1">3.4.19.12</ecNumber>
    </recommendedName>
    <alternativeName>
        <fullName evidence="1">Deubiquitinating enzyme 16</fullName>
    </alternativeName>
    <alternativeName>
        <fullName evidence="1">Ubiquitin thioesterase 16</fullName>
    </alternativeName>
    <alternativeName>
        <fullName evidence="1">Ubiquitin-specific-processing protease 16</fullName>
    </alternativeName>
</protein>
<gene>
    <name type="primary">usp16</name>
    <name type="ORF">si:dkey-121n8.2</name>
</gene>
<keyword id="KW-0010">Activator</keyword>
<keyword id="KW-0131">Cell cycle</keyword>
<keyword id="KW-0132">Cell division</keyword>
<keyword id="KW-0156">Chromatin regulator</keyword>
<keyword id="KW-0378">Hydrolase</keyword>
<keyword id="KW-0479">Metal-binding</keyword>
<keyword id="KW-0498">Mitosis</keyword>
<keyword id="KW-0539">Nucleus</keyword>
<keyword id="KW-0645">Protease</keyword>
<keyword id="KW-1185">Reference proteome</keyword>
<keyword id="KW-0788">Thiol protease</keyword>
<keyword id="KW-0804">Transcription</keyword>
<keyword id="KW-0805">Transcription regulation</keyword>
<keyword id="KW-0833">Ubl conjugation pathway</keyword>
<keyword id="KW-0862">Zinc</keyword>
<keyword id="KW-0863">Zinc-finger</keyword>
<name>UBP16_DANRE</name>
<proteinExistence type="inferred from homology"/>
<feature type="chain" id="PRO_0000367505" description="Ubiquitin carboxyl-terminal hydrolase 16">
    <location>
        <begin position="1"/>
        <end position="815"/>
    </location>
</feature>
<feature type="domain" description="USP">
    <location>
        <begin position="208"/>
        <end position="814"/>
    </location>
</feature>
<feature type="zinc finger region" description="UBP-type" evidence="2">
    <location>
        <begin position="22"/>
        <end position="143"/>
    </location>
</feature>
<feature type="region of interest" description="Disordered" evidence="3">
    <location>
        <begin position="1"/>
        <end position="27"/>
    </location>
</feature>
<feature type="region of interest" description="Disordered" evidence="3">
    <location>
        <begin position="148"/>
        <end position="200"/>
    </location>
</feature>
<feature type="region of interest" description="Disordered" evidence="3">
    <location>
        <begin position="411"/>
        <end position="510"/>
    </location>
</feature>
<feature type="compositionally biased region" description="Polar residues" evidence="3">
    <location>
        <begin position="12"/>
        <end position="22"/>
    </location>
</feature>
<feature type="compositionally biased region" description="Basic and acidic residues" evidence="3">
    <location>
        <begin position="148"/>
        <end position="161"/>
    </location>
</feature>
<feature type="compositionally biased region" description="Basic residues" evidence="3">
    <location>
        <begin position="411"/>
        <end position="420"/>
    </location>
</feature>
<feature type="compositionally biased region" description="Basic residues" evidence="3">
    <location>
        <begin position="449"/>
        <end position="468"/>
    </location>
</feature>
<feature type="compositionally biased region" description="Polar residues" evidence="3">
    <location>
        <begin position="478"/>
        <end position="510"/>
    </location>
</feature>
<feature type="active site" description="Nucleophile" evidence="1">
    <location>
        <position position="217"/>
    </location>
</feature>
<feature type="active site" description="Proton acceptor" evidence="1">
    <location>
        <position position="752"/>
    </location>
</feature>
<feature type="binding site" evidence="2">
    <location>
        <position position="24"/>
    </location>
    <ligand>
        <name>Zn(2+)</name>
        <dbReference type="ChEBI" id="CHEBI:29105"/>
        <label>1</label>
    </ligand>
</feature>
<feature type="binding site" evidence="2">
    <location>
        <position position="26"/>
    </location>
    <ligand>
        <name>Zn(2+)</name>
        <dbReference type="ChEBI" id="CHEBI:29105"/>
        <label>1</label>
    </ligand>
</feature>
<feature type="binding site" evidence="2">
    <location>
        <position position="48"/>
    </location>
    <ligand>
        <name>Zn(2+)</name>
        <dbReference type="ChEBI" id="CHEBI:29105"/>
        <label>2</label>
    </ligand>
</feature>
<feature type="binding site" evidence="2">
    <location>
        <position position="51"/>
    </location>
    <ligand>
        <name>Zn(2+)</name>
        <dbReference type="ChEBI" id="CHEBI:29105"/>
        <label>2</label>
    </ligand>
</feature>
<feature type="binding site" evidence="2">
    <location>
        <position position="76"/>
    </location>
    <ligand>
        <name>Zn(2+)</name>
        <dbReference type="ChEBI" id="CHEBI:29105"/>
        <label>3</label>
    </ligand>
</feature>
<feature type="binding site" evidence="2">
    <location>
        <position position="79"/>
    </location>
    <ligand>
        <name>Zn(2+)</name>
        <dbReference type="ChEBI" id="CHEBI:29105"/>
        <label>3</label>
    </ligand>
</feature>
<feature type="binding site" evidence="2">
    <location>
        <position position="84"/>
    </location>
    <ligand>
        <name>Zn(2+)</name>
        <dbReference type="ChEBI" id="CHEBI:29105"/>
        <label>2</label>
    </ligand>
</feature>
<feature type="binding site" evidence="2">
    <location>
        <position position="91"/>
    </location>
    <ligand>
        <name>Zn(2+)</name>
        <dbReference type="ChEBI" id="CHEBI:29105"/>
        <label>2</label>
    </ligand>
</feature>
<feature type="binding site" evidence="2">
    <location>
        <position position="95"/>
    </location>
    <ligand>
        <name>Zn(2+)</name>
        <dbReference type="ChEBI" id="CHEBI:29105"/>
        <label>3</label>
    </ligand>
</feature>
<feature type="binding site" evidence="2">
    <location>
        <position position="104"/>
    </location>
    <ligand>
        <name>Zn(2+)</name>
        <dbReference type="ChEBI" id="CHEBI:29105"/>
        <label>3</label>
    </ligand>
</feature>
<feature type="binding site" evidence="2">
    <location>
        <position position="117"/>
    </location>
    <ligand>
        <name>Zn(2+)</name>
        <dbReference type="ChEBI" id="CHEBI:29105"/>
        <label>1</label>
    </ligand>
</feature>
<feature type="binding site" evidence="2">
    <location>
        <position position="120"/>
    </location>
    <ligand>
        <name>Zn(2+)</name>
        <dbReference type="ChEBI" id="CHEBI:29105"/>
        <label>1</label>
    </ligand>
</feature>
<sequence length="815" mass="90450">MGKKKVKDRSAGTDSSSETAGPSCTHIRKGTENSVLKKACLNEHWSSCQDCEQDKPEEKQILEDQTDGESPAVWMCLKCGHRGCGRSGNQHAIKHYETPRSEPHCLVLSLDVWSVWCYICDDEVQYSSTGQLAQLITNIRKQVLTAPDKRNASKKSWKEDISVMNSAEQTQDEEKGKKGKQKSSSKQEDSPKSHQSAAAGSSAVVSVRGLSNLGNTCFFNAVVQSLSQTQYLRELLKQIAEEKSSFSITPALSSELDPLQIQLERPGSLTLAMCQLMNEIQETKKGVVTPKELFTQVCKKAPRFKGFQQQDSQELLRYLLDGMRAEEAKRVNSGILEALKSSGKNFEAEQTKKIVKEYEKDGAPKNFVDRVFGGAMSSTVMCKECKTVSLVTEMFLDLSLPVADEAYRKKNQKKAVQHRHSVSDDGDQDTSSLANGNEDMPTGTGSKYQQKKAKKQAKKQAKNQRRQQKQGGKVTLDAITNQSSTDPADSSMQTQTVSVNGSADAQPADTNQEDLSLEKHNEDQDDEEPEQEQAASVNNRFTALSEDQTTEDIAEQVNEDEDEIEQNCAEEEELVEELNTMSLTTPSEGDVENGEDTLEDVKEYTVVNRDPELAFRALASRTAPVKQECSVESCLYQFTEVEHLTENNRLMCVTCTKQQPGYKDGCKKAVYRDALKQMLISDPPVVLTLHLKRFQQVAYSVCKVNRHVQFPQILDLAPFCSLNCTGVKEGETQVLYSLYGIVEHSGTMRSGHYTAYVKSRPSTHNCVQNGTAAASGDAEASKGSWFHISDSSVHPVPEAKVQSSQAYLLFYEKIS</sequence>
<organism>
    <name type="scientific">Danio rerio</name>
    <name type="common">Zebrafish</name>
    <name type="synonym">Brachydanio rerio</name>
    <dbReference type="NCBI Taxonomy" id="7955"/>
    <lineage>
        <taxon>Eukaryota</taxon>
        <taxon>Metazoa</taxon>
        <taxon>Chordata</taxon>
        <taxon>Craniata</taxon>
        <taxon>Vertebrata</taxon>
        <taxon>Euteleostomi</taxon>
        <taxon>Actinopterygii</taxon>
        <taxon>Neopterygii</taxon>
        <taxon>Teleostei</taxon>
        <taxon>Ostariophysi</taxon>
        <taxon>Cypriniformes</taxon>
        <taxon>Danionidae</taxon>
        <taxon>Danioninae</taxon>
        <taxon>Danio</taxon>
    </lineage>
</organism>